<comment type="function">
    <text>Hirudin is a potent thrombin-specific protease inhibitor. It forms a stable non-covalent complex with alpha-thrombin, thereby abolishing its ability to cleave fibrinogen.</text>
</comment>
<comment type="subcellular location">
    <subcellularLocation>
        <location>Secreted</location>
    </subcellularLocation>
</comment>
<comment type="similarity">
    <text evidence="3">Belongs to the protease inhibitor I14 (hirudin) family.</text>
</comment>
<organism>
    <name type="scientific">Hirudo medicinalis</name>
    <name type="common">Medicinal leech</name>
    <dbReference type="NCBI Taxonomy" id="6421"/>
    <lineage>
        <taxon>Eukaryota</taxon>
        <taxon>Metazoa</taxon>
        <taxon>Spiralia</taxon>
        <taxon>Lophotrochozoa</taxon>
        <taxon>Annelida</taxon>
        <taxon>Clitellata</taxon>
        <taxon>Hirudinea</taxon>
        <taxon>Hirudinida</taxon>
        <taxon>Hirudiniformes</taxon>
        <taxon>Hirudinidae</taxon>
        <taxon>Hirudo</taxon>
    </lineage>
</organism>
<keyword id="KW-0002">3D-structure</keyword>
<keyword id="KW-0903">Direct protein sequencing</keyword>
<keyword id="KW-1015">Disulfide bond</keyword>
<keyword id="KW-0325">Glycoprotein</keyword>
<keyword id="KW-0646">Protease inhibitor</keyword>
<keyword id="KW-0964">Secreted</keyword>
<keyword id="KW-0722">Serine protease inhibitor</keyword>
<keyword id="KW-0765">Sulfation</keyword>
<accession>P28506</accession>
<dbReference type="PIR" id="S05674">
    <property type="entry name" value="S05674"/>
</dbReference>
<dbReference type="PDB" id="1FPH">
    <property type="method" value="X-ray"/>
    <property type="resolution" value="2.50 A"/>
    <property type="chains" value="I=54-65"/>
</dbReference>
<dbReference type="PDB" id="1G30">
    <property type="method" value="X-ray"/>
    <property type="resolution" value="2.00 A"/>
    <property type="chains" value="C=55-65"/>
</dbReference>
<dbReference type="PDB" id="1G32">
    <property type="method" value="X-ray"/>
    <property type="resolution" value="1.90 A"/>
    <property type="chains" value="C=55-65"/>
</dbReference>
<dbReference type="PDB" id="1KTS">
    <property type="method" value="X-ray"/>
    <property type="resolution" value="2.40 A"/>
    <property type="chains" value="C=55-65"/>
</dbReference>
<dbReference type="PDB" id="1KTT">
    <property type="method" value="X-ray"/>
    <property type="resolution" value="2.10 A"/>
    <property type="chains" value="C=55-65"/>
</dbReference>
<dbReference type="PDB" id="1MU6">
    <property type="method" value="X-ray"/>
    <property type="resolution" value="1.99 A"/>
    <property type="chains" value="C=55-65"/>
</dbReference>
<dbReference type="PDB" id="1MU8">
    <property type="method" value="X-ray"/>
    <property type="resolution" value="2.00 A"/>
    <property type="chains" value="C=55-65"/>
</dbReference>
<dbReference type="PDB" id="1MUE">
    <property type="method" value="X-ray"/>
    <property type="resolution" value="2.00 A"/>
    <property type="chains" value="C=55-65"/>
</dbReference>
<dbReference type="PDB" id="1OYT">
    <property type="method" value="X-ray"/>
    <property type="resolution" value="1.67 A"/>
    <property type="chains" value="I=55-65"/>
</dbReference>
<dbReference type="PDB" id="1RIW">
    <property type="method" value="X-ray"/>
    <property type="resolution" value="2.04 A"/>
    <property type="chains" value="D=55-65"/>
</dbReference>
<dbReference type="PDBsum" id="1FPH"/>
<dbReference type="PDBsum" id="1G30"/>
<dbReference type="PDBsum" id="1G32"/>
<dbReference type="PDBsum" id="1KTS"/>
<dbReference type="PDBsum" id="1KTT"/>
<dbReference type="PDBsum" id="1MU6"/>
<dbReference type="PDBsum" id="1MU8"/>
<dbReference type="PDBsum" id="1MUE"/>
<dbReference type="PDBsum" id="1OYT"/>
<dbReference type="PDBsum" id="1RIW"/>
<dbReference type="SMR" id="P28506"/>
<dbReference type="Allergome" id="9843">
    <property type="allergen name" value="Hir me Hirudin"/>
</dbReference>
<dbReference type="EvolutionaryTrace" id="P28506"/>
<dbReference type="GO" id="GO:0005576">
    <property type="term" value="C:extracellular region"/>
    <property type="evidence" value="ECO:0007669"/>
    <property type="project" value="UniProtKB-SubCell"/>
</dbReference>
<dbReference type="GO" id="GO:0004867">
    <property type="term" value="F:serine-type endopeptidase inhibitor activity"/>
    <property type="evidence" value="ECO:0007669"/>
    <property type="project" value="UniProtKB-KW"/>
</dbReference>
<dbReference type="FunFam" id="2.70.10.10:FF:000001">
    <property type="entry name" value="Hirudin variant-1"/>
    <property type="match status" value="1"/>
</dbReference>
<dbReference type="Gene3D" id="2.70.10.10">
    <property type="entry name" value="Thrombin Inhibitor (Hirudin), subunit I"/>
    <property type="match status" value="1"/>
</dbReference>
<dbReference type="InterPro" id="IPR024793">
    <property type="entry name" value="Hirudin"/>
</dbReference>
<dbReference type="InterPro" id="IPR011061">
    <property type="entry name" value="Hirudin/antistatin"/>
</dbReference>
<dbReference type="InterPro" id="IPR000429">
    <property type="entry name" value="Prot_inh_hirudin"/>
</dbReference>
<dbReference type="Pfam" id="PF00713">
    <property type="entry name" value="Hirudin"/>
    <property type="match status" value="1"/>
</dbReference>
<dbReference type="PIRSF" id="PIRSF001640">
    <property type="entry name" value="Hirudin"/>
    <property type="match status" value="1"/>
</dbReference>
<dbReference type="PRINTS" id="PR00777">
    <property type="entry name" value="HIRUDIN"/>
</dbReference>
<dbReference type="SUPFAM" id="SSF57262">
    <property type="entry name" value="Leech antihemostatic proteins"/>
    <property type="match status" value="1"/>
</dbReference>
<feature type="chain" id="PRO_0000195646" description="Hirudin-2B">
    <location>
        <begin position="1"/>
        <end position="65"/>
    </location>
</feature>
<feature type="region of interest" description="Interaction with thrombin active site" evidence="1">
    <location>
        <begin position="1"/>
        <end position="3"/>
    </location>
</feature>
<feature type="region of interest" description="Disordered" evidence="2">
    <location>
        <begin position="39"/>
        <end position="65"/>
    </location>
</feature>
<feature type="region of interest" description="Interaction with fibrinogen-binding exosite of thrombin" evidence="1">
    <location>
        <begin position="55"/>
        <end position="65"/>
    </location>
</feature>
<feature type="compositionally biased region" description="Acidic residues" evidence="2">
    <location>
        <begin position="55"/>
        <end position="65"/>
    </location>
</feature>
<feature type="modified residue" description="Sulfotyrosine" evidence="1">
    <location>
        <position position="63"/>
    </location>
</feature>
<feature type="glycosylation site" description="O-linked (GalNAc...) threonine" evidence="1">
    <location>
        <position position="45"/>
    </location>
</feature>
<feature type="disulfide bond" evidence="1">
    <location>
        <begin position="6"/>
        <end position="14"/>
    </location>
</feature>
<feature type="disulfide bond" evidence="1">
    <location>
        <begin position="16"/>
        <end position="28"/>
    </location>
</feature>
<feature type="disulfide bond" evidence="1">
    <location>
        <begin position="22"/>
        <end position="39"/>
    </location>
</feature>
<feature type="helix" evidence="4">
    <location>
        <begin position="61"/>
        <end position="64"/>
    </location>
</feature>
<name>HIR2B_HIRME</name>
<protein>
    <recommendedName>
        <fullName>Hirudin-2B</fullName>
    </recommendedName>
    <alternativeName>
        <fullName>Hirudin IIB</fullName>
    </alternativeName>
</protein>
<proteinExistence type="evidence at protein level"/>
<evidence type="ECO:0000250" key="1"/>
<evidence type="ECO:0000256" key="2">
    <source>
        <dbReference type="SAM" id="MobiDB-lite"/>
    </source>
</evidence>
<evidence type="ECO:0000305" key="3"/>
<evidence type="ECO:0007829" key="4">
    <source>
        <dbReference type="PDB" id="1MU8"/>
    </source>
</evidence>
<reference key="1">
    <citation type="journal article" date="1989" name="FEBS Lett.">
        <title>Primary structures of new 'iso-hirudins'.</title>
        <authorList>
            <person name="Scharf M."/>
            <person name="Engels J."/>
            <person name="Tripier D."/>
        </authorList>
    </citation>
    <scope>PROTEIN SEQUENCE</scope>
</reference>
<sequence>ITYTDCTESGQNLCLCEGSNVCGKGNKCILGSNGEENQCVTGEGTPKPQSHNDGDFEEIPEEYLQ</sequence>